<comment type="catalytic activity">
    <reaction evidence="1">
        <text>(4aS,6R)-4a-hydroxy-L-erythro-5,6,7,8-tetrahydrobiopterin = (6R)-L-erythro-6,7-dihydrobiopterin + H2O</text>
        <dbReference type="Rhea" id="RHEA:11920"/>
        <dbReference type="ChEBI" id="CHEBI:15377"/>
        <dbReference type="ChEBI" id="CHEBI:15642"/>
        <dbReference type="ChEBI" id="CHEBI:43120"/>
        <dbReference type="EC" id="4.2.1.96"/>
    </reaction>
</comment>
<comment type="similarity">
    <text evidence="1">Belongs to the pterin-4-alpha-carbinolamine dehydratase family.</text>
</comment>
<gene>
    <name type="ordered locus">Bd0889</name>
</gene>
<reference key="1">
    <citation type="journal article" date="2004" name="Science">
        <title>A predator unmasked: life cycle of Bdellovibrio bacteriovorus from a genomic perspective.</title>
        <authorList>
            <person name="Rendulic S."/>
            <person name="Jagtap P."/>
            <person name="Rosinus A."/>
            <person name="Eppinger M."/>
            <person name="Baar C."/>
            <person name="Lanz C."/>
            <person name="Keller H."/>
            <person name="Lambert C."/>
            <person name="Evans K.J."/>
            <person name="Goesmann A."/>
            <person name="Meyer F."/>
            <person name="Sockett R.E."/>
            <person name="Schuster S.C."/>
        </authorList>
    </citation>
    <scope>NUCLEOTIDE SEQUENCE [LARGE SCALE GENOMIC DNA]</scope>
    <source>
        <strain>ATCC 15356 / DSM 50701 / NCIMB 9529 / HD100</strain>
    </source>
</reference>
<keyword id="KW-0456">Lyase</keyword>
<keyword id="KW-1185">Reference proteome</keyword>
<accession>P61732</accession>
<dbReference type="EC" id="4.2.1.96" evidence="1"/>
<dbReference type="EMBL" id="BX842648">
    <property type="protein sequence ID" value="CAE78833.1"/>
    <property type="molecule type" value="Genomic_DNA"/>
</dbReference>
<dbReference type="RefSeq" id="WP_011163435.1">
    <property type="nucleotide sequence ID" value="NC_005363.1"/>
</dbReference>
<dbReference type="SMR" id="P61732"/>
<dbReference type="STRING" id="264462.Bd0889"/>
<dbReference type="GeneID" id="93011965"/>
<dbReference type="KEGG" id="bba:Bd0889"/>
<dbReference type="eggNOG" id="COG2154">
    <property type="taxonomic scope" value="Bacteria"/>
</dbReference>
<dbReference type="HOGENOM" id="CLU_081974_2_1_7"/>
<dbReference type="Proteomes" id="UP000008080">
    <property type="component" value="Chromosome"/>
</dbReference>
<dbReference type="GO" id="GO:0008124">
    <property type="term" value="F:4-alpha-hydroxytetrahydrobiopterin dehydratase activity"/>
    <property type="evidence" value="ECO:0007669"/>
    <property type="project" value="UniProtKB-UniRule"/>
</dbReference>
<dbReference type="GO" id="GO:0006729">
    <property type="term" value="P:tetrahydrobiopterin biosynthetic process"/>
    <property type="evidence" value="ECO:0007669"/>
    <property type="project" value="InterPro"/>
</dbReference>
<dbReference type="CDD" id="cd00913">
    <property type="entry name" value="PCD_DCoH_subfamily_a"/>
    <property type="match status" value="1"/>
</dbReference>
<dbReference type="Gene3D" id="3.30.1360.20">
    <property type="entry name" value="Transcriptional coactivator/pterin dehydratase"/>
    <property type="match status" value="1"/>
</dbReference>
<dbReference type="HAMAP" id="MF_00434">
    <property type="entry name" value="Pterin_4_alpha"/>
    <property type="match status" value="1"/>
</dbReference>
<dbReference type="InterPro" id="IPR036428">
    <property type="entry name" value="PCD_sf"/>
</dbReference>
<dbReference type="InterPro" id="IPR001533">
    <property type="entry name" value="Pterin_deHydtase"/>
</dbReference>
<dbReference type="NCBIfam" id="NF002017">
    <property type="entry name" value="PRK00823.1-2"/>
    <property type="match status" value="1"/>
</dbReference>
<dbReference type="PANTHER" id="PTHR12599">
    <property type="entry name" value="PTERIN-4-ALPHA-CARBINOLAMINE DEHYDRATASE"/>
    <property type="match status" value="1"/>
</dbReference>
<dbReference type="PANTHER" id="PTHR12599:SF0">
    <property type="entry name" value="PTERIN-4-ALPHA-CARBINOLAMINE DEHYDRATASE"/>
    <property type="match status" value="1"/>
</dbReference>
<dbReference type="Pfam" id="PF01329">
    <property type="entry name" value="Pterin_4a"/>
    <property type="match status" value="1"/>
</dbReference>
<dbReference type="SUPFAM" id="SSF55248">
    <property type="entry name" value="PCD-like"/>
    <property type="match status" value="1"/>
</dbReference>
<sequence>MMSQTELLRKKSHPVDQALTPEEIQQYLTVLDGWSLQGLHIAKSFEFKNYYQTIAFVNAIAFIVHTEDHHPELEVGYNRCVVKFYTHSVNEGLGGISENDFICAAKIDALAGNQFAPMSH</sequence>
<feature type="chain" id="PRO_0000063071" description="Putative pterin-4-alpha-carbinolamine dehydratase">
    <location>
        <begin position="1"/>
        <end position="120"/>
    </location>
</feature>
<organism>
    <name type="scientific">Bdellovibrio bacteriovorus (strain ATCC 15356 / DSM 50701 / NCIMB 9529 / HD100)</name>
    <dbReference type="NCBI Taxonomy" id="264462"/>
    <lineage>
        <taxon>Bacteria</taxon>
        <taxon>Pseudomonadati</taxon>
        <taxon>Bdellovibrionota</taxon>
        <taxon>Bdellovibrionia</taxon>
        <taxon>Bdellovibrionales</taxon>
        <taxon>Pseudobdellovibrionaceae</taxon>
        <taxon>Bdellovibrio</taxon>
    </lineage>
</organism>
<name>PHS_BDEBA</name>
<protein>
    <recommendedName>
        <fullName evidence="1">Putative pterin-4-alpha-carbinolamine dehydratase</fullName>
        <shortName evidence="1">PHS</shortName>
        <ecNumber evidence="1">4.2.1.96</ecNumber>
    </recommendedName>
    <alternativeName>
        <fullName evidence="1">4-alpha-hydroxy-tetrahydropterin dehydratase</fullName>
    </alternativeName>
    <alternativeName>
        <fullName evidence="1">Pterin carbinolamine dehydratase</fullName>
        <shortName evidence="1">PCD</shortName>
    </alternativeName>
</protein>
<evidence type="ECO:0000255" key="1">
    <source>
        <dbReference type="HAMAP-Rule" id="MF_00434"/>
    </source>
</evidence>
<proteinExistence type="inferred from homology"/>